<protein>
    <recommendedName>
        <fullName>Uncharacterized 11.0 kDa protein in Gp24-hoc intergenic region</fullName>
    </recommendedName>
    <alternativeName>
        <fullName>ORF2</fullName>
    </alternativeName>
</protein>
<gene>
    <name type="primary">y10B</name>
    <name type="synonym">24.2</name>
</gene>
<feature type="chain" id="PRO_0000165157" description="Uncharacterized 11.0 kDa protein in Gp24-hoc intergenic region">
    <location>
        <begin position="1"/>
        <end position="92"/>
    </location>
</feature>
<organism>
    <name type="scientific">Enterobacteria phage T4</name>
    <name type="common">Bacteriophage T4</name>
    <dbReference type="NCBI Taxonomy" id="10665"/>
    <lineage>
        <taxon>Viruses</taxon>
        <taxon>Duplodnaviria</taxon>
        <taxon>Heunggongvirae</taxon>
        <taxon>Uroviricota</taxon>
        <taxon>Caudoviricetes</taxon>
        <taxon>Straboviridae</taxon>
        <taxon>Tevenvirinae</taxon>
        <taxon>Tequatrovirus</taxon>
    </lineage>
</organism>
<organismHost>
    <name type="scientific">Escherichia coli</name>
    <dbReference type="NCBI Taxonomy" id="562"/>
</organismHost>
<reference key="1">
    <citation type="submission" date="1992-11" db="EMBL/GenBank/DDBJ databases">
        <authorList>
            <person name="Kaliman A.V."/>
            <person name="Khasanova M.A."/>
            <person name="Tanyashin V.I."/>
        </authorList>
    </citation>
    <scope>NUCLEOTIDE SEQUENCE [GENOMIC DNA]</scope>
</reference>
<reference key="2">
    <citation type="journal article" date="2003" name="Microbiol. Mol. Biol. Rev.">
        <title>Bacteriophage T4 genome.</title>
        <authorList>
            <person name="Miller E.S."/>
            <person name="Kutter E."/>
            <person name="Mosig G."/>
            <person name="Arisaka F."/>
            <person name="Kunisawa T."/>
            <person name="Ruger W."/>
        </authorList>
    </citation>
    <scope>NUCLEOTIDE SEQUENCE [LARGE SCALE GENOMIC DNA]</scope>
</reference>
<proteinExistence type="predicted"/>
<keyword id="KW-1185">Reference proteome</keyword>
<name>Y10B_BPT4</name>
<sequence length="92" mass="11002">MEQYDLYENESFANQLREKALKSKQFKLECFIKDFSELANKAAEQGKTHFNYYCIARDKLITEEIGDWLRKEGFSFKVNSDQRDGDWLEITF</sequence>
<dbReference type="EMBL" id="X69459">
    <property type="protein sequence ID" value="CAA49219.1"/>
    <property type="molecule type" value="Genomic_DNA"/>
</dbReference>
<dbReference type="EMBL" id="AF158101">
    <property type="protein sequence ID" value="AAD42431.1"/>
    <property type="molecule type" value="Genomic_DNA"/>
</dbReference>
<dbReference type="PIR" id="S28564">
    <property type="entry name" value="S28564"/>
</dbReference>
<dbReference type="RefSeq" id="NP_049791.1">
    <property type="nucleotide sequence ID" value="NC_000866.4"/>
</dbReference>
<dbReference type="SMR" id="P32278"/>
<dbReference type="GeneID" id="1258738"/>
<dbReference type="KEGG" id="vg:1258738"/>
<dbReference type="OrthoDB" id="17847at10239"/>
<dbReference type="Proteomes" id="UP000009087">
    <property type="component" value="Segment"/>
</dbReference>
<accession>P32278</accession>